<evidence type="ECO:0000255" key="1">
    <source>
        <dbReference type="HAMAP-Rule" id="MF_01595"/>
    </source>
</evidence>
<evidence type="ECO:0000256" key="2">
    <source>
        <dbReference type="SAM" id="MobiDB-lite"/>
    </source>
</evidence>
<gene>
    <name evidence="1" type="primary">pnp</name>
    <name type="ordered locus">Dole_3029</name>
</gene>
<organism>
    <name type="scientific">Desulfosudis oleivorans (strain DSM 6200 / JCM 39069 / Hxd3)</name>
    <name type="common">Desulfococcus oleovorans</name>
    <dbReference type="NCBI Taxonomy" id="96561"/>
    <lineage>
        <taxon>Bacteria</taxon>
        <taxon>Pseudomonadati</taxon>
        <taxon>Thermodesulfobacteriota</taxon>
        <taxon>Desulfobacteria</taxon>
        <taxon>Desulfobacterales</taxon>
        <taxon>Desulfosudaceae</taxon>
        <taxon>Desulfosudis</taxon>
    </lineage>
</organism>
<sequence>MTEHVFEATVNGKPFTIKTGRLAKQAAGAALVQYGETIVLVTVAAATEPKEDADFLPLSVEYQEKIYSAGRIPGNYFRREIGRPSEKETLTCRLTDRPIRPLFPAGYTFETQVITTVLSMDRENDPDVLSIVGASAALTISDLPFDGPLAAVRVGRLNGTLVANPTNTELDDCDINIVVAGSRSGVVMVEGGSNVVSEAEMLEAIFFGHNALLPLIDIQDQMRNACGKPKRVIVPPEKDTELETRIAELVGDAVAQAVTEPEKDARKSALSKVRENLFQGLGEAFADRKREIKGLFSDLVKKVCRDIVLNQGRRIDGRAFDEVRPISCEVGVLPRTHGSALFTRGETQVLGVMTLGSGHDEQRVETLFGDETRPFMLHYNFPPFCVGEVKRVMGPSRRDIGHGNLAHRGISYVLPDKETFDYTIRLVSEVLESNGSSSMGTVCSCILALMDGGVPIKAPVSGIAMGLVADGDKVAVLSDILGDEDHFGDMDFKVTGTEKGITALQMDIKIKSLSREILEKALHQAKDGRIHILGKMLEALSHYRDDISPYAPKIYIVKIHPDKIREIIGPGGKVIRELQAMSNTRIEVDDSGTVKIAASTEEEARIAIKAVEDIGRVPEPGEIYEGEVVRITDFGAFIQIKNGTDGLCHISELEHHHVKSVTDVVKMGDKVRVKVLEVSPEGKIRLSRKALLPAPEKGEEDEKSAPRSRRPGGNSDRRNNR</sequence>
<comment type="function">
    <text evidence="1">Involved in mRNA degradation. Catalyzes the phosphorolysis of single-stranded polyribonucleotides processively in the 3'- to 5'-direction.</text>
</comment>
<comment type="catalytic activity">
    <reaction evidence="1">
        <text>RNA(n+1) + phosphate = RNA(n) + a ribonucleoside 5'-diphosphate</text>
        <dbReference type="Rhea" id="RHEA:22096"/>
        <dbReference type="Rhea" id="RHEA-COMP:14527"/>
        <dbReference type="Rhea" id="RHEA-COMP:17342"/>
        <dbReference type="ChEBI" id="CHEBI:43474"/>
        <dbReference type="ChEBI" id="CHEBI:57930"/>
        <dbReference type="ChEBI" id="CHEBI:140395"/>
        <dbReference type="EC" id="2.7.7.8"/>
    </reaction>
</comment>
<comment type="cofactor">
    <cofactor evidence="1">
        <name>Mg(2+)</name>
        <dbReference type="ChEBI" id="CHEBI:18420"/>
    </cofactor>
</comment>
<comment type="subcellular location">
    <subcellularLocation>
        <location evidence="1">Cytoplasm</location>
    </subcellularLocation>
</comment>
<comment type="similarity">
    <text evidence="1">Belongs to the polyribonucleotide nucleotidyltransferase family.</text>
</comment>
<reference key="1">
    <citation type="submission" date="2007-10" db="EMBL/GenBank/DDBJ databases">
        <title>Complete sequence of Desulfococcus oleovorans Hxd3.</title>
        <authorList>
            <consortium name="US DOE Joint Genome Institute"/>
            <person name="Copeland A."/>
            <person name="Lucas S."/>
            <person name="Lapidus A."/>
            <person name="Barry K."/>
            <person name="Glavina del Rio T."/>
            <person name="Dalin E."/>
            <person name="Tice H."/>
            <person name="Pitluck S."/>
            <person name="Kiss H."/>
            <person name="Brettin T."/>
            <person name="Bruce D."/>
            <person name="Detter J.C."/>
            <person name="Han C."/>
            <person name="Schmutz J."/>
            <person name="Larimer F."/>
            <person name="Land M."/>
            <person name="Hauser L."/>
            <person name="Kyrpides N."/>
            <person name="Kim E."/>
            <person name="Wawrik B."/>
            <person name="Richardson P."/>
        </authorList>
    </citation>
    <scope>NUCLEOTIDE SEQUENCE [LARGE SCALE GENOMIC DNA]</scope>
    <source>
        <strain>DSM 6200 / JCM 39069 / Hxd3</strain>
    </source>
</reference>
<proteinExistence type="inferred from homology"/>
<keyword id="KW-0963">Cytoplasm</keyword>
<keyword id="KW-0460">Magnesium</keyword>
<keyword id="KW-0479">Metal-binding</keyword>
<keyword id="KW-0548">Nucleotidyltransferase</keyword>
<keyword id="KW-1185">Reference proteome</keyword>
<keyword id="KW-0694">RNA-binding</keyword>
<keyword id="KW-0808">Transferase</keyword>
<dbReference type="EC" id="2.7.7.8" evidence="1"/>
<dbReference type="EMBL" id="CP000859">
    <property type="protein sequence ID" value="ABW68832.1"/>
    <property type="molecule type" value="Genomic_DNA"/>
</dbReference>
<dbReference type="RefSeq" id="WP_012176443.1">
    <property type="nucleotide sequence ID" value="NC_009943.1"/>
</dbReference>
<dbReference type="SMR" id="A8ZZ59"/>
<dbReference type="STRING" id="96561.Dole_3029"/>
<dbReference type="KEGG" id="dol:Dole_3029"/>
<dbReference type="eggNOG" id="COG1185">
    <property type="taxonomic scope" value="Bacteria"/>
</dbReference>
<dbReference type="HOGENOM" id="CLU_004217_2_2_7"/>
<dbReference type="OrthoDB" id="9804305at2"/>
<dbReference type="Proteomes" id="UP000008561">
    <property type="component" value="Chromosome"/>
</dbReference>
<dbReference type="GO" id="GO:0005829">
    <property type="term" value="C:cytosol"/>
    <property type="evidence" value="ECO:0007669"/>
    <property type="project" value="TreeGrafter"/>
</dbReference>
<dbReference type="GO" id="GO:0000175">
    <property type="term" value="F:3'-5'-RNA exonuclease activity"/>
    <property type="evidence" value="ECO:0007669"/>
    <property type="project" value="TreeGrafter"/>
</dbReference>
<dbReference type="GO" id="GO:0000287">
    <property type="term" value="F:magnesium ion binding"/>
    <property type="evidence" value="ECO:0007669"/>
    <property type="project" value="UniProtKB-UniRule"/>
</dbReference>
<dbReference type="GO" id="GO:0004654">
    <property type="term" value="F:polyribonucleotide nucleotidyltransferase activity"/>
    <property type="evidence" value="ECO:0007669"/>
    <property type="project" value="UniProtKB-UniRule"/>
</dbReference>
<dbReference type="GO" id="GO:0003723">
    <property type="term" value="F:RNA binding"/>
    <property type="evidence" value="ECO:0007669"/>
    <property type="project" value="UniProtKB-UniRule"/>
</dbReference>
<dbReference type="GO" id="GO:0006402">
    <property type="term" value="P:mRNA catabolic process"/>
    <property type="evidence" value="ECO:0007669"/>
    <property type="project" value="UniProtKB-UniRule"/>
</dbReference>
<dbReference type="GO" id="GO:0006396">
    <property type="term" value="P:RNA processing"/>
    <property type="evidence" value="ECO:0007669"/>
    <property type="project" value="InterPro"/>
</dbReference>
<dbReference type="CDD" id="cd02393">
    <property type="entry name" value="KH-I_PNPase"/>
    <property type="match status" value="1"/>
</dbReference>
<dbReference type="CDD" id="cd11363">
    <property type="entry name" value="RNase_PH_PNPase_1"/>
    <property type="match status" value="1"/>
</dbReference>
<dbReference type="CDD" id="cd11364">
    <property type="entry name" value="RNase_PH_PNPase_2"/>
    <property type="match status" value="1"/>
</dbReference>
<dbReference type="CDD" id="cd04472">
    <property type="entry name" value="S1_PNPase"/>
    <property type="match status" value="1"/>
</dbReference>
<dbReference type="FunFam" id="3.30.1370.10:FF:000001">
    <property type="entry name" value="Polyribonucleotide nucleotidyltransferase"/>
    <property type="match status" value="1"/>
</dbReference>
<dbReference type="FunFam" id="3.30.230.70:FF:000001">
    <property type="entry name" value="Polyribonucleotide nucleotidyltransferase"/>
    <property type="match status" value="1"/>
</dbReference>
<dbReference type="FunFam" id="3.30.230.70:FF:000002">
    <property type="entry name" value="Polyribonucleotide nucleotidyltransferase"/>
    <property type="match status" value="1"/>
</dbReference>
<dbReference type="FunFam" id="2.40.50.140:FF:000189">
    <property type="entry name" value="Polyribonucleotide nucleotidyltransferase, putative"/>
    <property type="match status" value="1"/>
</dbReference>
<dbReference type="Gene3D" id="3.30.230.70">
    <property type="entry name" value="GHMP Kinase, N-terminal domain"/>
    <property type="match status" value="2"/>
</dbReference>
<dbReference type="Gene3D" id="3.30.1370.10">
    <property type="entry name" value="K Homology domain, type 1"/>
    <property type="match status" value="1"/>
</dbReference>
<dbReference type="Gene3D" id="2.40.50.140">
    <property type="entry name" value="Nucleic acid-binding proteins"/>
    <property type="match status" value="1"/>
</dbReference>
<dbReference type="HAMAP" id="MF_01595">
    <property type="entry name" value="PNPase"/>
    <property type="match status" value="1"/>
</dbReference>
<dbReference type="InterPro" id="IPR001247">
    <property type="entry name" value="ExoRNase_PH_dom1"/>
</dbReference>
<dbReference type="InterPro" id="IPR015847">
    <property type="entry name" value="ExoRNase_PH_dom2"/>
</dbReference>
<dbReference type="InterPro" id="IPR036345">
    <property type="entry name" value="ExoRNase_PH_dom2_sf"/>
</dbReference>
<dbReference type="InterPro" id="IPR004087">
    <property type="entry name" value="KH_dom"/>
</dbReference>
<dbReference type="InterPro" id="IPR004088">
    <property type="entry name" value="KH_dom_type_1"/>
</dbReference>
<dbReference type="InterPro" id="IPR036612">
    <property type="entry name" value="KH_dom_type_1_sf"/>
</dbReference>
<dbReference type="InterPro" id="IPR012340">
    <property type="entry name" value="NA-bd_OB-fold"/>
</dbReference>
<dbReference type="InterPro" id="IPR012162">
    <property type="entry name" value="PNPase"/>
</dbReference>
<dbReference type="InterPro" id="IPR027408">
    <property type="entry name" value="PNPase/RNase_PH_dom_sf"/>
</dbReference>
<dbReference type="InterPro" id="IPR015848">
    <property type="entry name" value="PNPase_PH_RNA-bd_bac/org-type"/>
</dbReference>
<dbReference type="InterPro" id="IPR036456">
    <property type="entry name" value="PNPase_PH_RNA-bd_sf"/>
</dbReference>
<dbReference type="InterPro" id="IPR020568">
    <property type="entry name" value="Ribosomal_Su5_D2-typ_SF"/>
</dbReference>
<dbReference type="InterPro" id="IPR003029">
    <property type="entry name" value="S1_domain"/>
</dbReference>
<dbReference type="NCBIfam" id="TIGR03591">
    <property type="entry name" value="polynuc_phos"/>
    <property type="match status" value="1"/>
</dbReference>
<dbReference type="NCBIfam" id="NF008805">
    <property type="entry name" value="PRK11824.1"/>
    <property type="match status" value="1"/>
</dbReference>
<dbReference type="PANTHER" id="PTHR11252">
    <property type="entry name" value="POLYRIBONUCLEOTIDE NUCLEOTIDYLTRANSFERASE"/>
    <property type="match status" value="1"/>
</dbReference>
<dbReference type="PANTHER" id="PTHR11252:SF0">
    <property type="entry name" value="POLYRIBONUCLEOTIDE NUCLEOTIDYLTRANSFERASE 1, MITOCHONDRIAL"/>
    <property type="match status" value="1"/>
</dbReference>
<dbReference type="Pfam" id="PF00013">
    <property type="entry name" value="KH_1"/>
    <property type="match status" value="1"/>
</dbReference>
<dbReference type="Pfam" id="PF03726">
    <property type="entry name" value="PNPase"/>
    <property type="match status" value="1"/>
</dbReference>
<dbReference type="Pfam" id="PF01138">
    <property type="entry name" value="RNase_PH"/>
    <property type="match status" value="2"/>
</dbReference>
<dbReference type="Pfam" id="PF03725">
    <property type="entry name" value="RNase_PH_C"/>
    <property type="match status" value="2"/>
</dbReference>
<dbReference type="Pfam" id="PF00575">
    <property type="entry name" value="S1"/>
    <property type="match status" value="1"/>
</dbReference>
<dbReference type="PIRSF" id="PIRSF005499">
    <property type="entry name" value="PNPase"/>
    <property type="match status" value="1"/>
</dbReference>
<dbReference type="SMART" id="SM00322">
    <property type="entry name" value="KH"/>
    <property type="match status" value="1"/>
</dbReference>
<dbReference type="SMART" id="SM00316">
    <property type="entry name" value="S1"/>
    <property type="match status" value="1"/>
</dbReference>
<dbReference type="SUPFAM" id="SSF54791">
    <property type="entry name" value="Eukaryotic type KH-domain (KH-domain type I)"/>
    <property type="match status" value="1"/>
</dbReference>
<dbReference type="SUPFAM" id="SSF50249">
    <property type="entry name" value="Nucleic acid-binding proteins"/>
    <property type="match status" value="1"/>
</dbReference>
<dbReference type="SUPFAM" id="SSF46915">
    <property type="entry name" value="Polynucleotide phosphorylase/guanosine pentaphosphate synthase (PNPase/GPSI), domain 3"/>
    <property type="match status" value="1"/>
</dbReference>
<dbReference type="SUPFAM" id="SSF55666">
    <property type="entry name" value="Ribonuclease PH domain 2-like"/>
    <property type="match status" value="2"/>
</dbReference>
<dbReference type="SUPFAM" id="SSF54211">
    <property type="entry name" value="Ribosomal protein S5 domain 2-like"/>
    <property type="match status" value="2"/>
</dbReference>
<dbReference type="PROSITE" id="PS50084">
    <property type="entry name" value="KH_TYPE_1"/>
    <property type="match status" value="1"/>
</dbReference>
<dbReference type="PROSITE" id="PS50126">
    <property type="entry name" value="S1"/>
    <property type="match status" value="1"/>
</dbReference>
<accession>A8ZZ59</accession>
<feature type="chain" id="PRO_1000147915" description="Polyribonucleotide nucleotidyltransferase">
    <location>
        <begin position="1"/>
        <end position="721"/>
    </location>
</feature>
<feature type="domain" description="KH" evidence="1">
    <location>
        <begin position="552"/>
        <end position="611"/>
    </location>
</feature>
<feature type="domain" description="S1 motif" evidence="1">
    <location>
        <begin position="621"/>
        <end position="689"/>
    </location>
</feature>
<feature type="region of interest" description="Disordered" evidence="2">
    <location>
        <begin position="687"/>
        <end position="721"/>
    </location>
</feature>
<feature type="binding site" evidence="1">
    <location>
        <position position="485"/>
    </location>
    <ligand>
        <name>Mg(2+)</name>
        <dbReference type="ChEBI" id="CHEBI:18420"/>
    </ligand>
</feature>
<feature type="binding site" evidence="1">
    <location>
        <position position="491"/>
    </location>
    <ligand>
        <name>Mg(2+)</name>
        <dbReference type="ChEBI" id="CHEBI:18420"/>
    </ligand>
</feature>
<protein>
    <recommendedName>
        <fullName evidence="1">Polyribonucleotide nucleotidyltransferase</fullName>
        <ecNumber evidence="1">2.7.7.8</ecNumber>
    </recommendedName>
    <alternativeName>
        <fullName evidence="1">Polynucleotide phosphorylase</fullName>
        <shortName evidence="1">PNPase</shortName>
    </alternativeName>
</protein>
<name>PNP_DESOH</name>